<feature type="chain" id="PRO_0000134962" description="Flavin prenyltransferase UbiX">
    <location>
        <begin position="1"/>
        <end position="195"/>
    </location>
</feature>
<feature type="binding site" evidence="1">
    <location>
        <begin position="17"/>
        <end position="19"/>
    </location>
    <ligand>
        <name>FMN</name>
        <dbReference type="ChEBI" id="CHEBI:58210"/>
    </ligand>
</feature>
<feature type="binding site" evidence="1">
    <location>
        <position position="43"/>
    </location>
    <ligand>
        <name>FMN</name>
        <dbReference type="ChEBI" id="CHEBI:58210"/>
    </ligand>
</feature>
<feature type="binding site" evidence="1">
    <location>
        <begin position="94"/>
        <end position="97"/>
    </location>
    <ligand>
        <name>FMN</name>
        <dbReference type="ChEBI" id="CHEBI:58210"/>
    </ligand>
</feature>
<feature type="binding site" evidence="1">
    <location>
        <position position="129"/>
    </location>
    <ligand>
        <name>FMN</name>
        <dbReference type="ChEBI" id="CHEBI:58210"/>
    </ligand>
</feature>
<feature type="binding site" evidence="1">
    <location>
        <position position="159"/>
    </location>
    <ligand>
        <name>dimethylallyl phosphate</name>
        <dbReference type="ChEBI" id="CHEBI:88052"/>
    </ligand>
</feature>
<feature type="binding site" evidence="1">
    <location>
        <position position="175"/>
    </location>
    <ligand>
        <name>dimethylallyl phosphate</name>
        <dbReference type="ChEBI" id="CHEBI:88052"/>
    </ligand>
</feature>
<keyword id="KW-0285">Flavoprotein</keyword>
<keyword id="KW-0288">FMN</keyword>
<keyword id="KW-0637">Prenyltransferase</keyword>
<keyword id="KW-1185">Reference proteome</keyword>
<keyword id="KW-0808">Transferase</keyword>
<name>UBIX_DEIRA</name>
<reference key="1">
    <citation type="journal article" date="1999" name="Science">
        <title>Genome sequence of the radioresistant bacterium Deinococcus radiodurans R1.</title>
        <authorList>
            <person name="White O."/>
            <person name="Eisen J.A."/>
            <person name="Heidelberg J.F."/>
            <person name="Hickey E.K."/>
            <person name="Peterson J.D."/>
            <person name="Dodson R.J."/>
            <person name="Haft D.H."/>
            <person name="Gwinn M.L."/>
            <person name="Nelson W.C."/>
            <person name="Richardson D.L."/>
            <person name="Moffat K.S."/>
            <person name="Qin H."/>
            <person name="Jiang L."/>
            <person name="Pamphile W."/>
            <person name="Crosby M."/>
            <person name="Shen M."/>
            <person name="Vamathevan J.J."/>
            <person name="Lam P."/>
            <person name="McDonald L.A."/>
            <person name="Utterback T.R."/>
            <person name="Zalewski C."/>
            <person name="Makarova K.S."/>
            <person name="Aravind L."/>
            <person name="Daly M.J."/>
            <person name="Minton K.W."/>
            <person name="Fleischmann R.D."/>
            <person name="Ketchum K.A."/>
            <person name="Nelson K.E."/>
            <person name="Salzberg S.L."/>
            <person name="Smith H.O."/>
            <person name="Venter J.C."/>
            <person name="Fraser C.M."/>
        </authorList>
    </citation>
    <scope>NUCLEOTIDE SEQUENCE [LARGE SCALE GENOMIC DNA]</scope>
    <source>
        <strain>ATCC 13939 / DSM 20539 / JCM 16871 / CCUG 27074 / LMG 4051 / NBRC 15346 / NCIMB 9279 / VKM B-1422 / R1</strain>
    </source>
</reference>
<organism>
    <name type="scientific">Deinococcus radiodurans (strain ATCC 13939 / DSM 20539 / JCM 16871 / CCUG 27074 / LMG 4051 / NBRC 15346 / NCIMB 9279 / VKM B-1422 / R1)</name>
    <dbReference type="NCBI Taxonomy" id="243230"/>
    <lineage>
        <taxon>Bacteria</taxon>
        <taxon>Thermotogati</taxon>
        <taxon>Deinococcota</taxon>
        <taxon>Deinococci</taxon>
        <taxon>Deinococcales</taxon>
        <taxon>Deinococcaceae</taxon>
        <taxon>Deinococcus</taxon>
    </lineage>
</organism>
<protein>
    <recommendedName>
        <fullName evidence="1">Flavin prenyltransferase UbiX</fullName>
        <ecNumber evidence="1">2.5.1.129</ecNumber>
    </recommendedName>
</protein>
<gene>
    <name evidence="1" type="primary">ubiX</name>
    <name type="ordered locus">DR_2603</name>
</gene>
<comment type="function">
    <text evidence="1">Flavin prenyltransferase that catalyzes the synthesis of the prenylated FMN cofactor (prenyl-FMN) for 4-hydroxy-3-polyprenylbenzoic acid decarboxylase UbiD. The prenyltransferase is metal-independent and links a dimethylallyl moiety from dimethylallyl monophosphate (DMAP) to the flavin N5 and C6 atoms of FMN.</text>
</comment>
<comment type="catalytic activity">
    <reaction evidence="1">
        <text>dimethylallyl phosphate + FMNH2 = prenylated FMNH2 + phosphate</text>
        <dbReference type="Rhea" id="RHEA:37743"/>
        <dbReference type="ChEBI" id="CHEBI:43474"/>
        <dbReference type="ChEBI" id="CHEBI:57618"/>
        <dbReference type="ChEBI" id="CHEBI:87467"/>
        <dbReference type="ChEBI" id="CHEBI:88052"/>
        <dbReference type="EC" id="2.5.1.129"/>
    </reaction>
</comment>
<comment type="similarity">
    <text evidence="1">Belongs to the UbiX/PAD1 family.</text>
</comment>
<proteinExistence type="inferred from homology"/>
<accession>Q9RR91</accession>
<evidence type="ECO:0000255" key="1">
    <source>
        <dbReference type="HAMAP-Rule" id="MF_01984"/>
    </source>
</evidence>
<sequence>MSDAPSGPPRLVVGVSGGSGIPYALDILRALRGLDVETHLVVSSGAKRVMSAEGGPQLADLTALASVVHDDRDLAAAVASGSYRTGGMLIVPCSAGTLAKVAHGFADNLISRAAHVTLKERRPLVLVVREDPMPRPMLQNMLAAHDAGATVMSASPGFYHAPESLGELLGFVTARVLDQFGLNAPGFRRWREDEA</sequence>
<dbReference type="EC" id="2.5.1.129" evidence="1"/>
<dbReference type="EMBL" id="AE000513">
    <property type="protein sequence ID" value="AAF12140.1"/>
    <property type="molecule type" value="Genomic_DNA"/>
</dbReference>
<dbReference type="PIR" id="C75254">
    <property type="entry name" value="C75254"/>
</dbReference>
<dbReference type="RefSeq" id="NP_296322.1">
    <property type="nucleotide sequence ID" value="NC_001263.1"/>
</dbReference>
<dbReference type="RefSeq" id="WP_010889227.1">
    <property type="nucleotide sequence ID" value="NC_001263.1"/>
</dbReference>
<dbReference type="SMR" id="Q9RR91"/>
<dbReference type="FunCoup" id="Q9RR91">
    <property type="interactions" value="191"/>
</dbReference>
<dbReference type="STRING" id="243230.DR_2603"/>
<dbReference type="PaxDb" id="243230-DR_2603"/>
<dbReference type="EnsemblBacteria" id="AAF12140">
    <property type="protein sequence ID" value="AAF12140"/>
    <property type="gene ID" value="DR_2603"/>
</dbReference>
<dbReference type="GeneID" id="69518857"/>
<dbReference type="KEGG" id="dra:DR_2603"/>
<dbReference type="PATRIC" id="fig|243230.17.peg.2850"/>
<dbReference type="eggNOG" id="COG0163">
    <property type="taxonomic scope" value="Bacteria"/>
</dbReference>
<dbReference type="HOGENOM" id="CLU_074522_0_0_0"/>
<dbReference type="InParanoid" id="Q9RR91"/>
<dbReference type="OrthoDB" id="9781577at2"/>
<dbReference type="Proteomes" id="UP000002524">
    <property type="component" value="Chromosome 1"/>
</dbReference>
<dbReference type="GO" id="GO:0016831">
    <property type="term" value="F:carboxy-lyase activity"/>
    <property type="evidence" value="ECO:0000318"/>
    <property type="project" value="GO_Central"/>
</dbReference>
<dbReference type="GO" id="GO:0106141">
    <property type="term" value="F:flavin prenyltransferase activity"/>
    <property type="evidence" value="ECO:0007669"/>
    <property type="project" value="UniProtKB-EC"/>
</dbReference>
<dbReference type="FunFam" id="3.40.50.1950:FF:000001">
    <property type="entry name" value="Flavin prenyltransferase UbiX"/>
    <property type="match status" value="1"/>
</dbReference>
<dbReference type="Gene3D" id="3.40.50.1950">
    <property type="entry name" value="Flavin prenyltransferase-like"/>
    <property type="match status" value="1"/>
</dbReference>
<dbReference type="HAMAP" id="MF_01984">
    <property type="entry name" value="ubiX_pad"/>
    <property type="match status" value="1"/>
</dbReference>
<dbReference type="InterPro" id="IPR036551">
    <property type="entry name" value="Flavin_trans-like"/>
</dbReference>
<dbReference type="InterPro" id="IPR003382">
    <property type="entry name" value="Flavoprotein"/>
</dbReference>
<dbReference type="InterPro" id="IPR004507">
    <property type="entry name" value="UbiX-like"/>
</dbReference>
<dbReference type="NCBIfam" id="NF004685">
    <property type="entry name" value="PRK06029.1"/>
    <property type="match status" value="1"/>
</dbReference>
<dbReference type="NCBIfam" id="TIGR00421">
    <property type="entry name" value="ubiX_pad"/>
    <property type="match status" value="1"/>
</dbReference>
<dbReference type="Pfam" id="PF02441">
    <property type="entry name" value="Flavoprotein"/>
    <property type="match status" value="1"/>
</dbReference>
<dbReference type="SUPFAM" id="SSF52507">
    <property type="entry name" value="Homo-oligomeric flavin-containing Cys decarboxylases, HFCD"/>
    <property type="match status" value="1"/>
</dbReference>